<keyword id="KW-0963">Cytoplasm</keyword>
<keyword id="KW-0328">Glycosyltransferase</keyword>
<keyword id="KW-0660">Purine salvage</keyword>
<keyword id="KW-0808">Transferase</keyword>
<proteinExistence type="inferred from homology"/>
<comment type="function">
    <text evidence="1">Catalyzes a salvage reaction resulting in the formation of AMP, that is energically less costly than de novo synthesis.</text>
</comment>
<comment type="catalytic activity">
    <reaction evidence="1">
        <text>AMP + diphosphate = 5-phospho-alpha-D-ribose 1-diphosphate + adenine</text>
        <dbReference type="Rhea" id="RHEA:16609"/>
        <dbReference type="ChEBI" id="CHEBI:16708"/>
        <dbReference type="ChEBI" id="CHEBI:33019"/>
        <dbReference type="ChEBI" id="CHEBI:58017"/>
        <dbReference type="ChEBI" id="CHEBI:456215"/>
        <dbReference type="EC" id="2.4.2.7"/>
    </reaction>
</comment>
<comment type="pathway">
    <text evidence="1">Purine metabolism; AMP biosynthesis via salvage pathway; AMP from adenine: step 1/1.</text>
</comment>
<comment type="subunit">
    <text evidence="1">Homodimer.</text>
</comment>
<comment type="subcellular location">
    <subcellularLocation>
        <location evidence="1">Cytoplasm</location>
    </subcellularLocation>
</comment>
<comment type="similarity">
    <text evidence="1">Belongs to the purine/pyrimidine phosphoribosyltransferase family.</text>
</comment>
<reference key="1">
    <citation type="journal article" date="2007" name="ISME J.">
        <title>Population level functional diversity in a microbial community revealed by comparative genomic and metagenomic analyses.</title>
        <authorList>
            <person name="Bhaya D."/>
            <person name="Grossman A.R."/>
            <person name="Steunou A.-S."/>
            <person name="Khuri N."/>
            <person name="Cohan F.M."/>
            <person name="Hamamura N."/>
            <person name="Melendrez M.C."/>
            <person name="Bateson M.M."/>
            <person name="Ward D.M."/>
            <person name="Heidelberg J.F."/>
        </authorList>
    </citation>
    <scope>NUCLEOTIDE SEQUENCE [LARGE SCALE GENOMIC DNA]</scope>
    <source>
        <strain>JA-3-3Ab</strain>
    </source>
</reference>
<gene>
    <name evidence="1" type="primary">apt</name>
    <name type="ordered locus">CYA_2018</name>
</gene>
<dbReference type="EC" id="2.4.2.7" evidence="1"/>
<dbReference type="EMBL" id="CP000239">
    <property type="protein sequence ID" value="ABD00160.1"/>
    <property type="molecule type" value="Genomic_DNA"/>
</dbReference>
<dbReference type="RefSeq" id="WP_011430834.1">
    <property type="nucleotide sequence ID" value="NC_007775.1"/>
</dbReference>
<dbReference type="SMR" id="Q2JT47"/>
<dbReference type="STRING" id="321327.CYA_2018"/>
<dbReference type="KEGG" id="cya:CYA_2018"/>
<dbReference type="eggNOG" id="COG0503">
    <property type="taxonomic scope" value="Bacteria"/>
</dbReference>
<dbReference type="HOGENOM" id="CLU_063339_3_0_3"/>
<dbReference type="OrthoDB" id="9803963at2"/>
<dbReference type="UniPathway" id="UPA00588">
    <property type="reaction ID" value="UER00646"/>
</dbReference>
<dbReference type="Proteomes" id="UP000008818">
    <property type="component" value="Chromosome"/>
</dbReference>
<dbReference type="GO" id="GO:0005737">
    <property type="term" value="C:cytoplasm"/>
    <property type="evidence" value="ECO:0007669"/>
    <property type="project" value="UniProtKB-SubCell"/>
</dbReference>
<dbReference type="GO" id="GO:0002055">
    <property type="term" value="F:adenine binding"/>
    <property type="evidence" value="ECO:0007669"/>
    <property type="project" value="TreeGrafter"/>
</dbReference>
<dbReference type="GO" id="GO:0003999">
    <property type="term" value="F:adenine phosphoribosyltransferase activity"/>
    <property type="evidence" value="ECO:0007669"/>
    <property type="project" value="UniProtKB-UniRule"/>
</dbReference>
<dbReference type="GO" id="GO:0016208">
    <property type="term" value="F:AMP binding"/>
    <property type="evidence" value="ECO:0007669"/>
    <property type="project" value="TreeGrafter"/>
</dbReference>
<dbReference type="GO" id="GO:0006168">
    <property type="term" value="P:adenine salvage"/>
    <property type="evidence" value="ECO:0007669"/>
    <property type="project" value="InterPro"/>
</dbReference>
<dbReference type="GO" id="GO:0044209">
    <property type="term" value="P:AMP salvage"/>
    <property type="evidence" value="ECO:0007669"/>
    <property type="project" value="UniProtKB-UniRule"/>
</dbReference>
<dbReference type="GO" id="GO:0006166">
    <property type="term" value="P:purine ribonucleoside salvage"/>
    <property type="evidence" value="ECO:0007669"/>
    <property type="project" value="UniProtKB-KW"/>
</dbReference>
<dbReference type="CDD" id="cd06223">
    <property type="entry name" value="PRTases_typeI"/>
    <property type="match status" value="1"/>
</dbReference>
<dbReference type="FunFam" id="3.40.50.2020:FF:000004">
    <property type="entry name" value="Adenine phosphoribosyltransferase"/>
    <property type="match status" value="1"/>
</dbReference>
<dbReference type="Gene3D" id="3.40.50.2020">
    <property type="match status" value="1"/>
</dbReference>
<dbReference type="HAMAP" id="MF_00004">
    <property type="entry name" value="Aden_phosphoribosyltr"/>
    <property type="match status" value="1"/>
</dbReference>
<dbReference type="InterPro" id="IPR005764">
    <property type="entry name" value="Ade_phspho_trans"/>
</dbReference>
<dbReference type="InterPro" id="IPR000836">
    <property type="entry name" value="PRibTrfase_dom"/>
</dbReference>
<dbReference type="InterPro" id="IPR029057">
    <property type="entry name" value="PRTase-like"/>
</dbReference>
<dbReference type="InterPro" id="IPR050054">
    <property type="entry name" value="UPRTase/APRTase"/>
</dbReference>
<dbReference type="NCBIfam" id="TIGR01090">
    <property type="entry name" value="apt"/>
    <property type="match status" value="1"/>
</dbReference>
<dbReference type="NCBIfam" id="NF002634">
    <property type="entry name" value="PRK02304.1-3"/>
    <property type="match status" value="1"/>
</dbReference>
<dbReference type="NCBIfam" id="NF002636">
    <property type="entry name" value="PRK02304.1-5"/>
    <property type="match status" value="1"/>
</dbReference>
<dbReference type="PANTHER" id="PTHR32315">
    <property type="entry name" value="ADENINE PHOSPHORIBOSYLTRANSFERASE"/>
    <property type="match status" value="1"/>
</dbReference>
<dbReference type="PANTHER" id="PTHR32315:SF3">
    <property type="entry name" value="ADENINE PHOSPHORIBOSYLTRANSFERASE"/>
    <property type="match status" value="1"/>
</dbReference>
<dbReference type="Pfam" id="PF00156">
    <property type="entry name" value="Pribosyltran"/>
    <property type="match status" value="1"/>
</dbReference>
<dbReference type="SUPFAM" id="SSF53271">
    <property type="entry name" value="PRTase-like"/>
    <property type="match status" value="1"/>
</dbReference>
<dbReference type="PROSITE" id="PS00103">
    <property type="entry name" value="PUR_PYR_PR_TRANSFER"/>
    <property type="match status" value="1"/>
</dbReference>
<name>APT_SYNJA</name>
<organism>
    <name type="scientific">Synechococcus sp. (strain JA-3-3Ab)</name>
    <name type="common">Cyanobacteria bacterium Yellowstone A-Prime</name>
    <dbReference type="NCBI Taxonomy" id="321327"/>
    <lineage>
        <taxon>Bacteria</taxon>
        <taxon>Bacillati</taxon>
        <taxon>Cyanobacteriota</taxon>
        <taxon>Cyanophyceae</taxon>
        <taxon>Synechococcales</taxon>
        <taxon>Synechococcaceae</taxon>
        <taxon>Synechococcus</taxon>
    </lineage>
</organism>
<accession>Q2JT47</accession>
<sequence>MDLRAFIRLVPDFPKPGILFRDITPLLRDPAGFRAAIEQLAAGTATMGSLDYVVGIESRGFILGAALAQHLGLGFVPVRKPGKLPPPVLSQSYSLEYGQDQLQLHAHALRPGDRVVIVDDVIATGGTAAATAQLVAQSGAEVGGFAFLIELAFLSGRKLLPPEIPTHVVMVDESN</sequence>
<evidence type="ECO:0000255" key="1">
    <source>
        <dbReference type="HAMAP-Rule" id="MF_00004"/>
    </source>
</evidence>
<feature type="chain" id="PRO_1000000362" description="Adenine phosphoribosyltransferase">
    <location>
        <begin position="1"/>
        <end position="175"/>
    </location>
</feature>
<protein>
    <recommendedName>
        <fullName evidence="1">Adenine phosphoribosyltransferase</fullName>
        <shortName evidence="1">APRT</shortName>
        <ecNumber evidence="1">2.4.2.7</ecNumber>
    </recommendedName>
</protein>